<keyword id="KW-0067">ATP-binding</keyword>
<keyword id="KW-0173">Coenzyme A biosynthesis</keyword>
<keyword id="KW-0963">Cytoplasm</keyword>
<keyword id="KW-0460">Magnesium</keyword>
<keyword id="KW-0547">Nucleotide-binding</keyword>
<keyword id="KW-0548">Nucleotidyltransferase</keyword>
<keyword id="KW-0808">Transferase</keyword>
<comment type="function">
    <text evidence="1">Reversibly transfers an adenylyl group from ATP to 4'-phosphopantetheine, yielding dephospho-CoA (dPCoA) and pyrophosphate.</text>
</comment>
<comment type="catalytic activity">
    <reaction evidence="1">
        <text>(R)-4'-phosphopantetheine + ATP + H(+) = 3'-dephospho-CoA + diphosphate</text>
        <dbReference type="Rhea" id="RHEA:19801"/>
        <dbReference type="ChEBI" id="CHEBI:15378"/>
        <dbReference type="ChEBI" id="CHEBI:30616"/>
        <dbReference type="ChEBI" id="CHEBI:33019"/>
        <dbReference type="ChEBI" id="CHEBI:57328"/>
        <dbReference type="ChEBI" id="CHEBI:61723"/>
        <dbReference type="EC" id="2.7.7.3"/>
    </reaction>
</comment>
<comment type="cofactor">
    <cofactor evidence="1">
        <name>Mg(2+)</name>
        <dbReference type="ChEBI" id="CHEBI:18420"/>
    </cofactor>
</comment>
<comment type="pathway">
    <text evidence="1">Cofactor biosynthesis; coenzyme A biosynthesis; CoA from (R)-pantothenate: step 4/5.</text>
</comment>
<comment type="subunit">
    <text evidence="1">Homohexamer.</text>
</comment>
<comment type="subcellular location">
    <subcellularLocation>
        <location evidence="1">Cytoplasm</location>
    </subcellularLocation>
</comment>
<comment type="similarity">
    <text evidence="1">Belongs to the bacterial CoaD family.</text>
</comment>
<evidence type="ECO:0000255" key="1">
    <source>
        <dbReference type="HAMAP-Rule" id="MF_00151"/>
    </source>
</evidence>
<sequence length="165" mass="17480">MSRIALYPGSFDPVTNGHLDVVRHAVALCDRLVVAIGIHPGKKPLFTTEERLMMVKSVFEPVANAAGCTFDCTTYDNLTVTSAQQVGATLMIRGLRDGTDLDYEMQIAGMNETMAPGIHTVFVPASVGVRPITATLVRQIAAMGGDVSAFVPPDVAASLKSKFAG</sequence>
<reference key="1">
    <citation type="submission" date="2006-03" db="EMBL/GenBank/DDBJ databases">
        <title>Complete sequence of Rhodopseudomonas palustris BisB5.</title>
        <authorList>
            <consortium name="US DOE Joint Genome Institute"/>
            <person name="Copeland A."/>
            <person name="Lucas S."/>
            <person name="Lapidus A."/>
            <person name="Barry K."/>
            <person name="Detter J.C."/>
            <person name="Glavina del Rio T."/>
            <person name="Hammon N."/>
            <person name="Israni S."/>
            <person name="Dalin E."/>
            <person name="Tice H."/>
            <person name="Pitluck S."/>
            <person name="Chain P."/>
            <person name="Malfatti S."/>
            <person name="Shin M."/>
            <person name="Vergez L."/>
            <person name="Schmutz J."/>
            <person name="Larimer F."/>
            <person name="Land M."/>
            <person name="Hauser L."/>
            <person name="Pelletier D.A."/>
            <person name="Kyrpides N."/>
            <person name="Lykidis A."/>
            <person name="Oda Y."/>
            <person name="Harwood C.S."/>
            <person name="Richardson P."/>
        </authorList>
    </citation>
    <scope>NUCLEOTIDE SEQUENCE [LARGE SCALE GENOMIC DNA]</scope>
    <source>
        <strain>BisB5</strain>
    </source>
</reference>
<proteinExistence type="inferred from homology"/>
<dbReference type="EC" id="2.7.7.3" evidence="1"/>
<dbReference type="EMBL" id="CP000283">
    <property type="protein sequence ID" value="ABE39827.1"/>
    <property type="molecule type" value="Genomic_DNA"/>
</dbReference>
<dbReference type="SMR" id="Q137B2"/>
<dbReference type="STRING" id="316057.RPD_2598"/>
<dbReference type="KEGG" id="rpd:RPD_2598"/>
<dbReference type="eggNOG" id="COG0669">
    <property type="taxonomic scope" value="Bacteria"/>
</dbReference>
<dbReference type="HOGENOM" id="CLU_100149_0_1_5"/>
<dbReference type="BioCyc" id="RPAL316057:RPD_RS13065-MONOMER"/>
<dbReference type="UniPathway" id="UPA00241">
    <property type="reaction ID" value="UER00355"/>
</dbReference>
<dbReference type="Proteomes" id="UP000001818">
    <property type="component" value="Chromosome"/>
</dbReference>
<dbReference type="GO" id="GO:0005737">
    <property type="term" value="C:cytoplasm"/>
    <property type="evidence" value="ECO:0007669"/>
    <property type="project" value="UniProtKB-SubCell"/>
</dbReference>
<dbReference type="GO" id="GO:0005524">
    <property type="term" value="F:ATP binding"/>
    <property type="evidence" value="ECO:0007669"/>
    <property type="project" value="UniProtKB-KW"/>
</dbReference>
<dbReference type="GO" id="GO:0004595">
    <property type="term" value="F:pantetheine-phosphate adenylyltransferase activity"/>
    <property type="evidence" value="ECO:0007669"/>
    <property type="project" value="UniProtKB-UniRule"/>
</dbReference>
<dbReference type="GO" id="GO:0015937">
    <property type="term" value="P:coenzyme A biosynthetic process"/>
    <property type="evidence" value="ECO:0007669"/>
    <property type="project" value="UniProtKB-UniRule"/>
</dbReference>
<dbReference type="CDD" id="cd02163">
    <property type="entry name" value="PPAT"/>
    <property type="match status" value="1"/>
</dbReference>
<dbReference type="Gene3D" id="3.40.50.620">
    <property type="entry name" value="HUPs"/>
    <property type="match status" value="1"/>
</dbReference>
<dbReference type="HAMAP" id="MF_00151">
    <property type="entry name" value="PPAT_bact"/>
    <property type="match status" value="1"/>
</dbReference>
<dbReference type="InterPro" id="IPR004821">
    <property type="entry name" value="Cyt_trans-like"/>
</dbReference>
<dbReference type="InterPro" id="IPR001980">
    <property type="entry name" value="PPAT"/>
</dbReference>
<dbReference type="InterPro" id="IPR014729">
    <property type="entry name" value="Rossmann-like_a/b/a_fold"/>
</dbReference>
<dbReference type="NCBIfam" id="TIGR01510">
    <property type="entry name" value="coaD_prev_kdtB"/>
    <property type="match status" value="1"/>
</dbReference>
<dbReference type="NCBIfam" id="TIGR00125">
    <property type="entry name" value="cyt_tran_rel"/>
    <property type="match status" value="1"/>
</dbReference>
<dbReference type="PANTHER" id="PTHR21342">
    <property type="entry name" value="PHOSPHOPANTETHEINE ADENYLYLTRANSFERASE"/>
    <property type="match status" value="1"/>
</dbReference>
<dbReference type="PANTHER" id="PTHR21342:SF1">
    <property type="entry name" value="PHOSPHOPANTETHEINE ADENYLYLTRANSFERASE"/>
    <property type="match status" value="1"/>
</dbReference>
<dbReference type="Pfam" id="PF01467">
    <property type="entry name" value="CTP_transf_like"/>
    <property type="match status" value="1"/>
</dbReference>
<dbReference type="PRINTS" id="PR01020">
    <property type="entry name" value="LPSBIOSNTHSS"/>
</dbReference>
<dbReference type="SUPFAM" id="SSF52374">
    <property type="entry name" value="Nucleotidylyl transferase"/>
    <property type="match status" value="1"/>
</dbReference>
<name>COAD_RHOPS</name>
<organism>
    <name type="scientific">Rhodopseudomonas palustris (strain BisB5)</name>
    <dbReference type="NCBI Taxonomy" id="316057"/>
    <lineage>
        <taxon>Bacteria</taxon>
        <taxon>Pseudomonadati</taxon>
        <taxon>Pseudomonadota</taxon>
        <taxon>Alphaproteobacteria</taxon>
        <taxon>Hyphomicrobiales</taxon>
        <taxon>Nitrobacteraceae</taxon>
        <taxon>Rhodopseudomonas</taxon>
    </lineage>
</organism>
<gene>
    <name evidence="1" type="primary">coaD</name>
    <name type="ordered locus">RPD_2598</name>
</gene>
<feature type="chain" id="PRO_1000011221" description="Phosphopantetheine adenylyltransferase">
    <location>
        <begin position="1"/>
        <end position="165"/>
    </location>
</feature>
<feature type="binding site" evidence="1">
    <location>
        <begin position="10"/>
        <end position="11"/>
    </location>
    <ligand>
        <name>ATP</name>
        <dbReference type="ChEBI" id="CHEBI:30616"/>
    </ligand>
</feature>
<feature type="binding site" evidence="1">
    <location>
        <position position="10"/>
    </location>
    <ligand>
        <name>substrate</name>
    </ligand>
</feature>
<feature type="binding site" evidence="1">
    <location>
        <position position="18"/>
    </location>
    <ligand>
        <name>ATP</name>
        <dbReference type="ChEBI" id="CHEBI:30616"/>
    </ligand>
</feature>
<feature type="binding site" evidence="1">
    <location>
        <position position="42"/>
    </location>
    <ligand>
        <name>substrate</name>
    </ligand>
</feature>
<feature type="binding site" evidence="1">
    <location>
        <position position="79"/>
    </location>
    <ligand>
        <name>substrate</name>
    </ligand>
</feature>
<feature type="binding site" evidence="1">
    <location>
        <position position="93"/>
    </location>
    <ligand>
        <name>substrate</name>
    </ligand>
</feature>
<feature type="binding site" evidence="1">
    <location>
        <begin position="94"/>
        <end position="96"/>
    </location>
    <ligand>
        <name>ATP</name>
        <dbReference type="ChEBI" id="CHEBI:30616"/>
    </ligand>
</feature>
<feature type="binding site" evidence="1">
    <location>
        <position position="104"/>
    </location>
    <ligand>
        <name>ATP</name>
        <dbReference type="ChEBI" id="CHEBI:30616"/>
    </ligand>
</feature>
<feature type="binding site" evidence="1">
    <location>
        <begin position="129"/>
        <end position="135"/>
    </location>
    <ligand>
        <name>ATP</name>
        <dbReference type="ChEBI" id="CHEBI:30616"/>
    </ligand>
</feature>
<feature type="site" description="Transition state stabilizer" evidence="1">
    <location>
        <position position="18"/>
    </location>
</feature>
<accession>Q137B2</accession>
<protein>
    <recommendedName>
        <fullName evidence="1">Phosphopantetheine adenylyltransferase</fullName>
        <ecNumber evidence="1">2.7.7.3</ecNumber>
    </recommendedName>
    <alternativeName>
        <fullName evidence="1">Dephospho-CoA pyrophosphorylase</fullName>
    </alternativeName>
    <alternativeName>
        <fullName evidence="1">Pantetheine-phosphate adenylyltransferase</fullName>
        <shortName evidence="1">PPAT</shortName>
    </alternativeName>
</protein>